<reference key="1">
    <citation type="journal article" date="2009" name="BMC Genomics">
        <title>Pseudogene accumulation in the evolutionary histories of Salmonella enterica serovars Paratyphi A and Typhi.</title>
        <authorList>
            <person name="Holt K.E."/>
            <person name="Thomson N.R."/>
            <person name="Wain J."/>
            <person name="Langridge G.C."/>
            <person name="Hasan R."/>
            <person name="Bhutta Z.A."/>
            <person name="Quail M.A."/>
            <person name="Norbertczak H."/>
            <person name="Walker D."/>
            <person name="Simmonds M."/>
            <person name="White B."/>
            <person name="Bason N."/>
            <person name="Mungall K."/>
            <person name="Dougan G."/>
            <person name="Parkhill J."/>
        </authorList>
    </citation>
    <scope>NUCLEOTIDE SEQUENCE [LARGE SCALE GENOMIC DNA]</scope>
    <source>
        <strain>AKU_12601</strain>
    </source>
</reference>
<organism>
    <name type="scientific">Salmonella paratyphi A (strain AKU_12601)</name>
    <dbReference type="NCBI Taxonomy" id="554290"/>
    <lineage>
        <taxon>Bacteria</taxon>
        <taxon>Pseudomonadati</taxon>
        <taxon>Pseudomonadota</taxon>
        <taxon>Gammaproteobacteria</taxon>
        <taxon>Enterobacterales</taxon>
        <taxon>Enterobacteriaceae</taxon>
        <taxon>Salmonella</taxon>
    </lineage>
</organism>
<gene>
    <name evidence="1" type="primary">guaC</name>
    <name type="ordered locus">SSPA0141</name>
</gene>
<protein>
    <recommendedName>
        <fullName evidence="1">GMP reductase</fullName>
        <ecNumber evidence="1">1.7.1.7</ecNumber>
    </recommendedName>
    <alternativeName>
        <fullName evidence="1">Guanosine 5'-monophosphate oxidoreductase</fullName>
        <shortName evidence="1">Guanosine monophosphate reductase</shortName>
    </alternativeName>
</protein>
<proteinExistence type="inferred from homology"/>
<accession>B5BLD7</accession>
<keyword id="KW-0479">Metal-binding</keyword>
<keyword id="KW-0521">NADP</keyword>
<keyword id="KW-0560">Oxidoreductase</keyword>
<keyword id="KW-0630">Potassium</keyword>
<sequence>MRIEEDLKLGFKDVLIRPKRSTLKSRSDVELERQFTFKHSGQTWSGVPIIAANMDTVGTFEMAQALAGFDILTAVHKHYTVEEWAAFINTASADVLKHVMVSTGTSDADFEKTVQILALNPALNFVCIDVANGYSEHFVQFVAKAREAWPTKTICAGNVVTGEMCEELILSGADIVKVGIGPGSVCTTRVKTGVGYPQLSAVIECADAAHGLGGMIVSDGGCTMPGDVAKAFGGGADFVMLGGMLAGHEESGGSVVEENGEKFMLFYGMSSESAMNRHVGGVAKYRAAEGKTVKLPLRGPVGNTARDILGGLRSACTYVGASRLKELTKRTTFIRVQEQENRIFNSL</sequence>
<comment type="function">
    <text evidence="1">Catalyzes the irreversible NADPH-dependent deamination of GMP to IMP. It functions in the conversion of nucleobase, nucleoside and nucleotide derivatives of G to A nucleotides, and in maintaining the intracellular balance of A and G nucleotides.</text>
</comment>
<comment type="catalytic activity">
    <reaction evidence="1">
        <text>IMP + NH4(+) + NADP(+) = GMP + NADPH + 2 H(+)</text>
        <dbReference type="Rhea" id="RHEA:17185"/>
        <dbReference type="ChEBI" id="CHEBI:15378"/>
        <dbReference type="ChEBI" id="CHEBI:28938"/>
        <dbReference type="ChEBI" id="CHEBI:57783"/>
        <dbReference type="ChEBI" id="CHEBI:58053"/>
        <dbReference type="ChEBI" id="CHEBI:58115"/>
        <dbReference type="ChEBI" id="CHEBI:58349"/>
        <dbReference type="EC" id="1.7.1.7"/>
    </reaction>
</comment>
<comment type="subunit">
    <text evidence="1">Homotetramer.</text>
</comment>
<comment type="similarity">
    <text evidence="1">Belongs to the IMPDH/GMPR family. GuaC type 1 subfamily.</text>
</comment>
<evidence type="ECO:0000255" key="1">
    <source>
        <dbReference type="HAMAP-Rule" id="MF_00596"/>
    </source>
</evidence>
<name>GUAC_SALPK</name>
<dbReference type="EC" id="1.7.1.7" evidence="1"/>
<dbReference type="EMBL" id="FM200053">
    <property type="protein sequence ID" value="CAR58252.1"/>
    <property type="molecule type" value="Genomic_DNA"/>
</dbReference>
<dbReference type="RefSeq" id="WP_001217365.1">
    <property type="nucleotide sequence ID" value="NC_011147.1"/>
</dbReference>
<dbReference type="SMR" id="B5BLD7"/>
<dbReference type="KEGG" id="sek:SSPA0141"/>
<dbReference type="HOGENOM" id="CLU_022552_5_3_6"/>
<dbReference type="Proteomes" id="UP000001869">
    <property type="component" value="Chromosome"/>
</dbReference>
<dbReference type="GO" id="GO:0005829">
    <property type="term" value="C:cytosol"/>
    <property type="evidence" value="ECO:0007669"/>
    <property type="project" value="TreeGrafter"/>
</dbReference>
<dbReference type="GO" id="GO:1902560">
    <property type="term" value="C:GMP reductase complex"/>
    <property type="evidence" value="ECO:0007669"/>
    <property type="project" value="InterPro"/>
</dbReference>
<dbReference type="GO" id="GO:0003920">
    <property type="term" value="F:GMP reductase activity"/>
    <property type="evidence" value="ECO:0007669"/>
    <property type="project" value="UniProtKB-UniRule"/>
</dbReference>
<dbReference type="GO" id="GO:0046872">
    <property type="term" value="F:metal ion binding"/>
    <property type="evidence" value="ECO:0007669"/>
    <property type="project" value="UniProtKB-KW"/>
</dbReference>
<dbReference type="GO" id="GO:0006163">
    <property type="term" value="P:purine nucleotide metabolic process"/>
    <property type="evidence" value="ECO:0007669"/>
    <property type="project" value="UniProtKB-UniRule"/>
</dbReference>
<dbReference type="CDD" id="cd00381">
    <property type="entry name" value="IMPDH"/>
    <property type="match status" value="1"/>
</dbReference>
<dbReference type="FunFam" id="3.20.20.70:FF:000012">
    <property type="entry name" value="GMP reductase"/>
    <property type="match status" value="1"/>
</dbReference>
<dbReference type="Gene3D" id="3.20.20.70">
    <property type="entry name" value="Aldolase class I"/>
    <property type="match status" value="1"/>
</dbReference>
<dbReference type="HAMAP" id="MF_00596">
    <property type="entry name" value="GMP_reduct_type1"/>
    <property type="match status" value="1"/>
</dbReference>
<dbReference type="InterPro" id="IPR013785">
    <property type="entry name" value="Aldolase_TIM"/>
</dbReference>
<dbReference type="InterPro" id="IPR050139">
    <property type="entry name" value="GMP_reductase"/>
</dbReference>
<dbReference type="InterPro" id="IPR005993">
    <property type="entry name" value="GMPR"/>
</dbReference>
<dbReference type="InterPro" id="IPR015875">
    <property type="entry name" value="IMP_DH/GMP_Rdtase_CS"/>
</dbReference>
<dbReference type="InterPro" id="IPR001093">
    <property type="entry name" value="IMP_DH_GMPRt"/>
</dbReference>
<dbReference type="NCBIfam" id="TIGR01305">
    <property type="entry name" value="GMP_reduct_1"/>
    <property type="match status" value="1"/>
</dbReference>
<dbReference type="NCBIfam" id="NF003470">
    <property type="entry name" value="PRK05096.1"/>
    <property type="match status" value="1"/>
</dbReference>
<dbReference type="PANTHER" id="PTHR43170">
    <property type="entry name" value="GMP REDUCTASE"/>
    <property type="match status" value="1"/>
</dbReference>
<dbReference type="PANTHER" id="PTHR43170:SF5">
    <property type="entry name" value="GMP REDUCTASE"/>
    <property type="match status" value="1"/>
</dbReference>
<dbReference type="Pfam" id="PF00478">
    <property type="entry name" value="IMPDH"/>
    <property type="match status" value="1"/>
</dbReference>
<dbReference type="PIRSF" id="PIRSF000235">
    <property type="entry name" value="GMP_reductase"/>
    <property type="match status" value="1"/>
</dbReference>
<dbReference type="SMART" id="SM01240">
    <property type="entry name" value="IMPDH"/>
    <property type="match status" value="1"/>
</dbReference>
<dbReference type="SUPFAM" id="SSF51412">
    <property type="entry name" value="Inosine monophosphate dehydrogenase (IMPDH)"/>
    <property type="match status" value="1"/>
</dbReference>
<dbReference type="PROSITE" id="PS00487">
    <property type="entry name" value="IMP_DH_GMP_RED"/>
    <property type="match status" value="1"/>
</dbReference>
<feature type="chain" id="PRO_1000129866" description="GMP reductase">
    <location>
        <begin position="1"/>
        <end position="347"/>
    </location>
</feature>
<feature type="active site" description="Thioimidate intermediate" evidence="1">
    <location>
        <position position="186"/>
    </location>
</feature>
<feature type="binding site" evidence="1">
    <location>
        <begin position="108"/>
        <end position="131"/>
    </location>
    <ligand>
        <name>NADP(+)</name>
        <dbReference type="ChEBI" id="CHEBI:58349"/>
    </ligand>
</feature>
<feature type="binding site" evidence="1">
    <location>
        <position position="181"/>
    </location>
    <ligand>
        <name>K(+)</name>
        <dbReference type="ChEBI" id="CHEBI:29103"/>
    </ligand>
</feature>
<feature type="binding site" evidence="1">
    <location>
        <position position="183"/>
    </location>
    <ligand>
        <name>K(+)</name>
        <dbReference type="ChEBI" id="CHEBI:29103"/>
    </ligand>
</feature>
<feature type="binding site" evidence="1">
    <location>
        <begin position="216"/>
        <end position="239"/>
    </location>
    <ligand>
        <name>NADP(+)</name>
        <dbReference type="ChEBI" id="CHEBI:58349"/>
    </ligand>
</feature>